<evidence type="ECO:0000255" key="1">
    <source>
        <dbReference type="HAMAP-Rule" id="MF_03139"/>
    </source>
</evidence>
<comment type="function">
    <text evidence="1">Catalyzes the reaction of cyanate with bicarbonate to produce ammonia and carbon dioxide.</text>
</comment>
<comment type="catalytic activity">
    <reaction evidence="1">
        <text>cyanate + hydrogencarbonate + 3 H(+) = NH4(+) + 2 CO2</text>
        <dbReference type="Rhea" id="RHEA:11120"/>
        <dbReference type="ChEBI" id="CHEBI:15378"/>
        <dbReference type="ChEBI" id="CHEBI:16526"/>
        <dbReference type="ChEBI" id="CHEBI:17544"/>
        <dbReference type="ChEBI" id="CHEBI:28938"/>
        <dbReference type="ChEBI" id="CHEBI:29195"/>
        <dbReference type="EC" id="4.2.1.104"/>
    </reaction>
</comment>
<comment type="similarity">
    <text evidence="1">Belongs to the cyanase family.</text>
</comment>
<keyword id="KW-0456">Lyase</keyword>
<sequence length="164" mass="18518">MEESKSSVASRLMSVKRTSGKSYGRIAEETGLTNVYVAQLLRRQAQLKADTAPKLQAALPELTDELLQEMMKPPLRSYDPHLIQEPTVYRLNEAVMHFGESIKEIINEEFGDGIMSAIDFYCSVDKVKGVDGKDRVVLTFDGKYLPHTEQKSEHMVSRLRLQGD</sequence>
<gene>
    <name evidence="1" type="primary">CYN</name>
    <name type="ORF">VITISV_023919</name>
</gene>
<name>CYNS_VITVI</name>
<feature type="chain" id="PRO_0000403230" description="Cyanate hydratase">
    <location>
        <begin position="1"/>
        <end position="164"/>
    </location>
</feature>
<feature type="active site" evidence="1">
    <location>
        <position position="90"/>
    </location>
</feature>
<feature type="active site" evidence="1">
    <location>
        <position position="93"/>
    </location>
</feature>
<feature type="active site" evidence="1">
    <location>
        <position position="116"/>
    </location>
</feature>
<organism>
    <name type="scientific">Vitis vinifera</name>
    <name type="common">Grape</name>
    <dbReference type="NCBI Taxonomy" id="29760"/>
    <lineage>
        <taxon>Eukaryota</taxon>
        <taxon>Viridiplantae</taxon>
        <taxon>Streptophyta</taxon>
        <taxon>Embryophyta</taxon>
        <taxon>Tracheophyta</taxon>
        <taxon>Spermatophyta</taxon>
        <taxon>Magnoliopsida</taxon>
        <taxon>eudicotyledons</taxon>
        <taxon>Gunneridae</taxon>
        <taxon>Pentapetalae</taxon>
        <taxon>rosids</taxon>
        <taxon>Vitales</taxon>
        <taxon>Vitaceae</taxon>
        <taxon>Viteae</taxon>
        <taxon>Vitis</taxon>
    </lineage>
</organism>
<dbReference type="EC" id="4.2.1.104" evidence="1"/>
<dbReference type="EMBL" id="AM461723">
    <property type="protein sequence ID" value="CAN67990.1"/>
    <property type="molecule type" value="Genomic_DNA"/>
</dbReference>
<dbReference type="RefSeq" id="NP_001384846.1">
    <property type="nucleotide sequence ID" value="NM_001397917.1"/>
</dbReference>
<dbReference type="RefSeq" id="XP_002285393.1">
    <property type="nucleotide sequence ID" value="XM_002285357.4"/>
</dbReference>
<dbReference type="SMR" id="A5BJL8"/>
<dbReference type="PaxDb" id="29760-VIT_05s0049g01520.t01"/>
<dbReference type="EnsemblPlants" id="Vitvi05g00800_t001">
    <property type="protein sequence ID" value="Vitvi05g00800_P001"/>
    <property type="gene ID" value="Vitvi05g00800"/>
</dbReference>
<dbReference type="GeneID" id="100245884"/>
<dbReference type="Gramene" id="Vitvi05g00800_t001">
    <property type="protein sequence ID" value="Vitvi05g00800_P001"/>
    <property type="gene ID" value="Vitvi05g00800"/>
</dbReference>
<dbReference type="eggNOG" id="ENOG502RY7W">
    <property type="taxonomic scope" value="Eukaryota"/>
</dbReference>
<dbReference type="HOGENOM" id="CLU_103452_2_0_1"/>
<dbReference type="OrthoDB" id="10019422at2759"/>
<dbReference type="ExpressionAtlas" id="A5BJL8">
    <property type="expression patterns" value="baseline and differential"/>
</dbReference>
<dbReference type="GO" id="GO:0008824">
    <property type="term" value="F:cyanate hydratase activity"/>
    <property type="evidence" value="ECO:0007669"/>
    <property type="project" value="UniProtKB-UniRule"/>
</dbReference>
<dbReference type="GO" id="GO:0003677">
    <property type="term" value="F:DNA binding"/>
    <property type="evidence" value="ECO:0007669"/>
    <property type="project" value="InterPro"/>
</dbReference>
<dbReference type="GO" id="GO:0042802">
    <property type="term" value="F:identical protein binding"/>
    <property type="evidence" value="ECO:0007669"/>
    <property type="project" value="EnsemblPlants"/>
</dbReference>
<dbReference type="GO" id="GO:0009440">
    <property type="term" value="P:cyanate catabolic process"/>
    <property type="evidence" value="ECO:0007669"/>
    <property type="project" value="EnsemblPlants"/>
</dbReference>
<dbReference type="GO" id="GO:0009651">
    <property type="term" value="P:response to salt stress"/>
    <property type="evidence" value="ECO:0007669"/>
    <property type="project" value="EnsemblPlants"/>
</dbReference>
<dbReference type="CDD" id="cd00559">
    <property type="entry name" value="Cyanase_C"/>
    <property type="match status" value="1"/>
</dbReference>
<dbReference type="FunFam" id="3.30.1160.10:FF:000002">
    <property type="entry name" value="Cyanate hydratase"/>
    <property type="match status" value="1"/>
</dbReference>
<dbReference type="Gene3D" id="3.30.1160.10">
    <property type="entry name" value="Cyanate lyase, C-terminal domain"/>
    <property type="match status" value="1"/>
</dbReference>
<dbReference type="Gene3D" id="1.10.260.40">
    <property type="entry name" value="lambda repressor-like DNA-binding domains"/>
    <property type="match status" value="1"/>
</dbReference>
<dbReference type="HAMAP" id="MF_00535">
    <property type="entry name" value="Cyanate_hydrat"/>
    <property type="match status" value="1"/>
</dbReference>
<dbReference type="InterPro" id="IPR008076">
    <property type="entry name" value="Cyanase"/>
</dbReference>
<dbReference type="InterPro" id="IPR003712">
    <property type="entry name" value="Cyanate_lyase_C"/>
</dbReference>
<dbReference type="InterPro" id="IPR036581">
    <property type="entry name" value="Cyanate_lyase_C_sf"/>
</dbReference>
<dbReference type="InterPro" id="IPR010982">
    <property type="entry name" value="Lambda_DNA-bd_dom_sf"/>
</dbReference>
<dbReference type="NCBIfam" id="TIGR00673">
    <property type="entry name" value="cynS"/>
    <property type="match status" value="1"/>
</dbReference>
<dbReference type="PANTHER" id="PTHR34186">
    <property type="entry name" value="CYANATE HYDRATASE"/>
    <property type="match status" value="1"/>
</dbReference>
<dbReference type="PANTHER" id="PTHR34186:SF2">
    <property type="entry name" value="CYANATE HYDRATASE"/>
    <property type="match status" value="1"/>
</dbReference>
<dbReference type="Pfam" id="PF02560">
    <property type="entry name" value="Cyanate_lyase"/>
    <property type="match status" value="1"/>
</dbReference>
<dbReference type="PIRSF" id="PIRSF001263">
    <property type="entry name" value="Cyanate_hydratas"/>
    <property type="match status" value="1"/>
</dbReference>
<dbReference type="PRINTS" id="PR01693">
    <property type="entry name" value="CYANASE"/>
</dbReference>
<dbReference type="SMART" id="SM01116">
    <property type="entry name" value="Cyanate_lyase"/>
    <property type="match status" value="1"/>
</dbReference>
<dbReference type="SUPFAM" id="SSF55234">
    <property type="entry name" value="Cyanase C-terminal domain"/>
    <property type="match status" value="1"/>
</dbReference>
<dbReference type="SUPFAM" id="SSF47413">
    <property type="entry name" value="lambda repressor-like DNA-binding domains"/>
    <property type="match status" value="1"/>
</dbReference>
<reference key="1">
    <citation type="journal article" date="2007" name="PLoS ONE">
        <title>A high quality draft consensus sequence of the genome of a heterozygous grapevine variety.</title>
        <authorList>
            <person name="Velasco R."/>
            <person name="Zharkikh A."/>
            <person name="Troggio M."/>
            <person name="Cartwright D.A."/>
            <person name="Cestaro A."/>
            <person name="Pruss D."/>
            <person name="Pindo M."/>
            <person name="FitzGerald L.M."/>
            <person name="Vezzulli S."/>
            <person name="Reid J."/>
            <person name="Malacarne G."/>
            <person name="Iliev D."/>
            <person name="Coppola G."/>
            <person name="Wardell B."/>
            <person name="Micheletti D."/>
            <person name="Macalma T."/>
            <person name="Facci M."/>
            <person name="Mitchell J.T."/>
            <person name="Perazzolli M."/>
            <person name="Eldredge G."/>
            <person name="Gatto P."/>
            <person name="Oyzerski R."/>
            <person name="Moretto M."/>
            <person name="Gutin N."/>
            <person name="Stefanini M."/>
            <person name="Chen Y."/>
            <person name="Segala C."/>
            <person name="Davenport C."/>
            <person name="Dematte L."/>
            <person name="Mraz A."/>
            <person name="Battilana J."/>
            <person name="Stormo K."/>
            <person name="Costa F."/>
            <person name="Tao Q."/>
            <person name="Si-Ammour A."/>
            <person name="Harkins T."/>
            <person name="Lackey A."/>
            <person name="Perbost C."/>
            <person name="Taillon B."/>
            <person name="Stella A."/>
            <person name="Solovyev V."/>
            <person name="Fawcett J.A."/>
            <person name="Sterck L."/>
            <person name="Vandepoele K."/>
            <person name="Grando S.M."/>
            <person name="Toppo S."/>
            <person name="Moser C."/>
            <person name="Lanchbury J."/>
            <person name="Bogden R."/>
            <person name="Skolnick M."/>
            <person name="Sgaramella V."/>
            <person name="Bhatnagar S.K."/>
            <person name="Fontana P."/>
            <person name="Gutin A."/>
            <person name="Van de Peer Y."/>
            <person name="Salamini F."/>
            <person name="Viola R."/>
        </authorList>
    </citation>
    <scope>NUCLEOTIDE SEQUENCE [LARGE SCALE GENOMIC DNA]</scope>
    <source>
        <strain>cv. Pinot noir</strain>
    </source>
</reference>
<accession>A5BJL8</accession>
<proteinExistence type="inferred from homology"/>
<protein>
    <recommendedName>
        <fullName evidence="1">Cyanate hydratase</fullName>
        <shortName evidence="1">Cyanase</shortName>
        <ecNumber evidence="1">4.2.1.104</ecNumber>
    </recommendedName>
    <alternativeName>
        <fullName evidence="1">Cyanate hydrolase</fullName>
    </alternativeName>
    <alternativeName>
        <fullName evidence="1">Cyanate lyase</fullName>
    </alternativeName>
</protein>